<sequence>MIDSLDLVIDTVLAREVLDSRGNPTVEAEVLLEGGAIGRAIVPSGASTGAYEAHELRDAGDRYFGKGVLKVVENIEERIAPTICGLSASDQATIDGVMSELDGTENKSKLGANAILAVSIATARSAANGYGMPLYRYLGGPMASLLPVPLMNVINGGAHAANNLDFQEFMLVPHGANTFREALRMGAEVFHTLKQLLSEKGLSTAVGDEGGFAPNLQSNQAAGDLLVKSIEKAGFIPGEQISLALDVASTEFFKDGAYFFGGRNYSTEGMIEELVKLVNAYPIVSIEDGLAEDDWEGWGLLTKELGEKVQLVGDDLFVTNTSRLQRGINQKVANSILIKVNQIGSLTETLQAIDLANRSGYTSVISHRSGETEDTTIADLSVATRAGQIKTGSLSRSERVAKYNQLLRIEDELGSEATYAGSNDLGPLCGKK</sequence>
<protein>
    <recommendedName>
        <fullName evidence="1">Enolase</fullName>
        <ecNumber evidence="1">4.2.1.11</ecNumber>
    </recommendedName>
    <alternativeName>
        <fullName evidence="1">2-phospho-D-glycerate hydro-lyase</fullName>
    </alternativeName>
    <alternativeName>
        <fullName evidence="1">2-phosphoglycerate dehydratase</fullName>
    </alternativeName>
</protein>
<proteinExistence type="inferred from homology"/>
<reference key="1">
    <citation type="journal article" date="2007" name="PLoS Genet.">
        <title>Patterns and implications of gene gain and loss in the evolution of Prochlorococcus.</title>
        <authorList>
            <person name="Kettler G.C."/>
            <person name="Martiny A.C."/>
            <person name="Huang K."/>
            <person name="Zucker J."/>
            <person name="Coleman M.L."/>
            <person name="Rodrigue S."/>
            <person name="Chen F."/>
            <person name="Lapidus A."/>
            <person name="Ferriera S."/>
            <person name="Johnson J."/>
            <person name="Steglich C."/>
            <person name="Church G.M."/>
            <person name="Richardson P."/>
            <person name="Chisholm S.W."/>
        </authorList>
    </citation>
    <scope>NUCLEOTIDE SEQUENCE [LARGE SCALE GENOMIC DNA]</scope>
    <source>
        <strain>MIT 9211</strain>
    </source>
</reference>
<accession>A9BDH2</accession>
<gene>
    <name evidence="1" type="primary">eno</name>
    <name type="ordered locus">P9211_02271</name>
</gene>
<evidence type="ECO:0000255" key="1">
    <source>
        <dbReference type="HAMAP-Rule" id="MF_00318"/>
    </source>
</evidence>
<name>ENO_PROM4</name>
<organism>
    <name type="scientific">Prochlorococcus marinus (strain MIT 9211)</name>
    <dbReference type="NCBI Taxonomy" id="93059"/>
    <lineage>
        <taxon>Bacteria</taxon>
        <taxon>Bacillati</taxon>
        <taxon>Cyanobacteriota</taxon>
        <taxon>Cyanophyceae</taxon>
        <taxon>Synechococcales</taxon>
        <taxon>Prochlorococcaceae</taxon>
        <taxon>Prochlorococcus</taxon>
    </lineage>
</organism>
<feature type="chain" id="PRO_1000115899" description="Enolase">
    <location>
        <begin position="1"/>
        <end position="432"/>
    </location>
</feature>
<feature type="active site" description="Proton donor" evidence="1">
    <location>
        <position position="209"/>
    </location>
</feature>
<feature type="active site" description="Proton acceptor" evidence="1">
    <location>
        <position position="339"/>
    </location>
</feature>
<feature type="binding site" evidence="1">
    <location>
        <position position="167"/>
    </location>
    <ligand>
        <name>(2R)-2-phosphoglycerate</name>
        <dbReference type="ChEBI" id="CHEBI:58289"/>
    </ligand>
</feature>
<feature type="binding site" evidence="1">
    <location>
        <position position="246"/>
    </location>
    <ligand>
        <name>Mg(2+)</name>
        <dbReference type="ChEBI" id="CHEBI:18420"/>
    </ligand>
</feature>
<feature type="binding site" evidence="1">
    <location>
        <position position="287"/>
    </location>
    <ligand>
        <name>Mg(2+)</name>
        <dbReference type="ChEBI" id="CHEBI:18420"/>
    </ligand>
</feature>
<feature type="binding site" evidence="1">
    <location>
        <position position="314"/>
    </location>
    <ligand>
        <name>Mg(2+)</name>
        <dbReference type="ChEBI" id="CHEBI:18420"/>
    </ligand>
</feature>
<feature type="binding site" evidence="1">
    <location>
        <position position="339"/>
    </location>
    <ligand>
        <name>(2R)-2-phosphoglycerate</name>
        <dbReference type="ChEBI" id="CHEBI:58289"/>
    </ligand>
</feature>
<feature type="binding site" evidence="1">
    <location>
        <position position="368"/>
    </location>
    <ligand>
        <name>(2R)-2-phosphoglycerate</name>
        <dbReference type="ChEBI" id="CHEBI:58289"/>
    </ligand>
</feature>
<feature type="binding site" evidence="1">
    <location>
        <position position="369"/>
    </location>
    <ligand>
        <name>(2R)-2-phosphoglycerate</name>
        <dbReference type="ChEBI" id="CHEBI:58289"/>
    </ligand>
</feature>
<feature type="binding site" evidence="1">
    <location>
        <position position="390"/>
    </location>
    <ligand>
        <name>(2R)-2-phosphoglycerate</name>
        <dbReference type="ChEBI" id="CHEBI:58289"/>
    </ligand>
</feature>
<comment type="function">
    <text evidence="1">Catalyzes the reversible conversion of 2-phosphoglycerate (2-PG) into phosphoenolpyruvate (PEP). It is essential for the degradation of carbohydrates via glycolysis.</text>
</comment>
<comment type="catalytic activity">
    <reaction evidence="1">
        <text>(2R)-2-phosphoglycerate = phosphoenolpyruvate + H2O</text>
        <dbReference type="Rhea" id="RHEA:10164"/>
        <dbReference type="ChEBI" id="CHEBI:15377"/>
        <dbReference type="ChEBI" id="CHEBI:58289"/>
        <dbReference type="ChEBI" id="CHEBI:58702"/>
        <dbReference type="EC" id="4.2.1.11"/>
    </reaction>
</comment>
<comment type="cofactor">
    <cofactor evidence="1">
        <name>Mg(2+)</name>
        <dbReference type="ChEBI" id="CHEBI:18420"/>
    </cofactor>
    <text evidence="1">Binds a second Mg(2+) ion via substrate during catalysis.</text>
</comment>
<comment type="pathway">
    <text evidence="1">Carbohydrate degradation; glycolysis; pyruvate from D-glyceraldehyde 3-phosphate: step 4/5.</text>
</comment>
<comment type="subcellular location">
    <subcellularLocation>
        <location evidence="1">Cytoplasm</location>
    </subcellularLocation>
    <subcellularLocation>
        <location evidence="1">Secreted</location>
    </subcellularLocation>
    <subcellularLocation>
        <location evidence="1">Cell surface</location>
    </subcellularLocation>
    <text evidence="1">Fractions of enolase are present in both the cytoplasm and on the cell surface.</text>
</comment>
<comment type="similarity">
    <text evidence="1">Belongs to the enolase family.</text>
</comment>
<dbReference type="EC" id="4.2.1.11" evidence="1"/>
<dbReference type="EMBL" id="CP000878">
    <property type="protein sequence ID" value="ABX08158.1"/>
    <property type="molecule type" value="Genomic_DNA"/>
</dbReference>
<dbReference type="RefSeq" id="WP_012194783.1">
    <property type="nucleotide sequence ID" value="NC_009976.1"/>
</dbReference>
<dbReference type="SMR" id="A9BDH2"/>
<dbReference type="STRING" id="93059.P9211_02271"/>
<dbReference type="KEGG" id="pmj:P9211_02271"/>
<dbReference type="eggNOG" id="COG0148">
    <property type="taxonomic scope" value="Bacteria"/>
</dbReference>
<dbReference type="HOGENOM" id="CLU_031223_2_1_3"/>
<dbReference type="OrthoDB" id="9804716at2"/>
<dbReference type="UniPathway" id="UPA00109">
    <property type="reaction ID" value="UER00187"/>
</dbReference>
<dbReference type="Proteomes" id="UP000000788">
    <property type="component" value="Chromosome"/>
</dbReference>
<dbReference type="GO" id="GO:0009986">
    <property type="term" value="C:cell surface"/>
    <property type="evidence" value="ECO:0007669"/>
    <property type="project" value="UniProtKB-SubCell"/>
</dbReference>
<dbReference type="GO" id="GO:0005576">
    <property type="term" value="C:extracellular region"/>
    <property type="evidence" value="ECO:0007669"/>
    <property type="project" value="UniProtKB-SubCell"/>
</dbReference>
<dbReference type="GO" id="GO:0000015">
    <property type="term" value="C:phosphopyruvate hydratase complex"/>
    <property type="evidence" value="ECO:0007669"/>
    <property type="project" value="InterPro"/>
</dbReference>
<dbReference type="GO" id="GO:0000287">
    <property type="term" value="F:magnesium ion binding"/>
    <property type="evidence" value="ECO:0007669"/>
    <property type="project" value="UniProtKB-UniRule"/>
</dbReference>
<dbReference type="GO" id="GO:0004634">
    <property type="term" value="F:phosphopyruvate hydratase activity"/>
    <property type="evidence" value="ECO:0007669"/>
    <property type="project" value="UniProtKB-UniRule"/>
</dbReference>
<dbReference type="GO" id="GO:0006096">
    <property type="term" value="P:glycolytic process"/>
    <property type="evidence" value="ECO:0007669"/>
    <property type="project" value="UniProtKB-UniRule"/>
</dbReference>
<dbReference type="CDD" id="cd03313">
    <property type="entry name" value="enolase"/>
    <property type="match status" value="1"/>
</dbReference>
<dbReference type="FunFam" id="3.20.20.120:FF:000001">
    <property type="entry name" value="Enolase"/>
    <property type="match status" value="1"/>
</dbReference>
<dbReference type="FunFam" id="3.30.390.10:FF:000001">
    <property type="entry name" value="Enolase"/>
    <property type="match status" value="1"/>
</dbReference>
<dbReference type="Gene3D" id="3.20.20.120">
    <property type="entry name" value="Enolase-like C-terminal domain"/>
    <property type="match status" value="1"/>
</dbReference>
<dbReference type="Gene3D" id="3.30.390.10">
    <property type="entry name" value="Enolase-like, N-terminal domain"/>
    <property type="match status" value="1"/>
</dbReference>
<dbReference type="HAMAP" id="MF_00318">
    <property type="entry name" value="Enolase"/>
    <property type="match status" value="1"/>
</dbReference>
<dbReference type="InterPro" id="IPR000941">
    <property type="entry name" value="Enolase"/>
</dbReference>
<dbReference type="InterPro" id="IPR036849">
    <property type="entry name" value="Enolase-like_C_sf"/>
</dbReference>
<dbReference type="InterPro" id="IPR029017">
    <property type="entry name" value="Enolase-like_N"/>
</dbReference>
<dbReference type="InterPro" id="IPR020810">
    <property type="entry name" value="Enolase_C"/>
</dbReference>
<dbReference type="InterPro" id="IPR020809">
    <property type="entry name" value="Enolase_CS"/>
</dbReference>
<dbReference type="InterPro" id="IPR020811">
    <property type="entry name" value="Enolase_N"/>
</dbReference>
<dbReference type="NCBIfam" id="TIGR01060">
    <property type="entry name" value="eno"/>
    <property type="match status" value="1"/>
</dbReference>
<dbReference type="PANTHER" id="PTHR11902">
    <property type="entry name" value="ENOLASE"/>
    <property type="match status" value="1"/>
</dbReference>
<dbReference type="PANTHER" id="PTHR11902:SF1">
    <property type="entry name" value="ENOLASE"/>
    <property type="match status" value="1"/>
</dbReference>
<dbReference type="Pfam" id="PF00113">
    <property type="entry name" value="Enolase_C"/>
    <property type="match status" value="1"/>
</dbReference>
<dbReference type="Pfam" id="PF03952">
    <property type="entry name" value="Enolase_N"/>
    <property type="match status" value="1"/>
</dbReference>
<dbReference type="PIRSF" id="PIRSF001400">
    <property type="entry name" value="Enolase"/>
    <property type="match status" value="1"/>
</dbReference>
<dbReference type="PRINTS" id="PR00148">
    <property type="entry name" value="ENOLASE"/>
</dbReference>
<dbReference type="SFLD" id="SFLDF00002">
    <property type="entry name" value="enolase"/>
    <property type="match status" value="1"/>
</dbReference>
<dbReference type="SFLD" id="SFLDG00178">
    <property type="entry name" value="enolase"/>
    <property type="match status" value="1"/>
</dbReference>
<dbReference type="SMART" id="SM01192">
    <property type="entry name" value="Enolase_C"/>
    <property type="match status" value="1"/>
</dbReference>
<dbReference type="SMART" id="SM01193">
    <property type="entry name" value="Enolase_N"/>
    <property type="match status" value="1"/>
</dbReference>
<dbReference type="SUPFAM" id="SSF51604">
    <property type="entry name" value="Enolase C-terminal domain-like"/>
    <property type="match status" value="1"/>
</dbReference>
<dbReference type="SUPFAM" id="SSF54826">
    <property type="entry name" value="Enolase N-terminal domain-like"/>
    <property type="match status" value="1"/>
</dbReference>
<dbReference type="PROSITE" id="PS00164">
    <property type="entry name" value="ENOLASE"/>
    <property type="match status" value="1"/>
</dbReference>
<keyword id="KW-0963">Cytoplasm</keyword>
<keyword id="KW-0324">Glycolysis</keyword>
<keyword id="KW-0456">Lyase</keyword>
<keyword id="KW-0460">Magnesium</keyword>
<keyword id="KW-0479">Metal-binding</keyword>
<keyword id="KW-1185">Reference proteome</keyword>
<keyword id="KW-0964">Secreted</keyword>